<keyword id="KW-0963">Cytoplasm</keyword>
<keyword id="KW-0324">Glycolysis</keyword>
<keyword id="KW-0456">Lyase</keyword>
<keyword id="KW-1185">Reference proteome</keyword>
<keyword id="KW-0704">Schiff base</keyword>
<feature type="chain" id="PRO_0000138943" description="Probable fructose-bisphosphate aldolase class 1">
    <location>
        <begin position="1"/>
        <end position="348"/>
    </location>
</feature>
<feature type="active site" description="Schiff-base intermediate with dihydroxyacetone-P" evidence="1">
    <location>
        <position position="236"/>
    </location>
</feature>
<sequence length="348" mass="37988">MTTIFDLLGKDADYLLNHKCVIKKEALTLPSGDLVSRVFAESDRNNRVLRSLQQMFSCGRLGGTGYLSILPVDQGVEHTAGASFAKNPMYFDPENIVRLAMEAGCSAVASSYGVLSILARRYAHKIPFLLKLNHNELLSYPTTYHQIFFSQVEDAYNMGAVAVGATIYFGSESSSEEIVAVAEAFARARELGLATVLWCYLRNPHFVVNNVDYHTAADLTGQADHLGATLGADIVKQKLPTLQGGFKTINFSKTDDLVYSELSSNHPIDLCRYQVLNSYCGKVGLINSGGPSGQDDFAEAVKTAVINKRAGGMGLILGRKAFQRPFSEGVRLLNLIQDIYLDPTISIS</sequence>
<evidence type="ECO:0000250" key="1"/>
<evidence type="ECO:0000305" key="2"/>
<reference key="1">
    <citation type="journal article" date="1998" name="Science">
        <title>Genome sequence of an obligate intracellular pathogen of humans: Chlamydia trachomatis.</title>
        <authorList>
            <person name="Stephens R.S."/>
            <person name="Kalman S."/>
            <person name="Lammel C.J."/>
            <person name="Fan J."/>
            <person name="Marathe R."/>
            <person name="Aravind L."/>
            <person name="Mitchell W.P."/>
            <person name="Olinger L."/>
            <person name="Tatusov R.L."/>
            <person name="Zhao Q."/>
            <person name="Koonin E.V."/>
            <person name="Davis R.W."/>
        </authorList>
    </citation>
    <scope>NUCLEOTIDE SEQUENCE [LARGE SCALE GENOMIC DNA]</scope>
    <source>
        <strain>ATCC VR-885 / DSM 19411 / UW-3/Cx</strain>
    </source>
</reference>
<gene>
    <name type="primary">fbaB</name>
    <name type="ordered locus">CT_215</name>
</gene>
<proteinExistence type="inferred from homology"/>
<organism>
    <name type="scientific">Chlamydia trachomatis serovar D (strain ATCC VR-885 / DSM 19411 / UW-3/Cx)</name>
    <dbReference type="NCBI Taxonomy" id="272561"/>
    <lineage>
        <taxon>Bacteria</taxon>
        <taxon>Pseudomonadati</taxon>
        <taxon>Chlamydiota</taxon>
        <taxon>Chlamydiia</taxon>
        <taxon>Chlamydiales</taxon>
        <taxon>Chlamydiaceae</taxon>
        <taxon>Chlamydia/Chlamydophila group</taxon>
        <taxon>Chlamydia</taxon>
    </lineage>
</organism>
<dbReference type="EC" id="4.1.2.13"/>
<dbReference type="EMBL" id="AE001273">
    <property type="protein sequence ID" value="AAC67807.1"/>
    <property type="molecule type" value="Genomic_DNA"/>
</dbReference>
<dbReference type="PIR" id="F71542">
    <property type="entry name" value="F71542"/>
</dbReference>
<dbReference type="RefSeq" id="WP_009871561.1">
    <property type="nucleotide sequence ID" value="NC_000117.1"/>
</dbReference>
<dbReference type="SMR" id="O84217"/>
<dbReference type="STRING" id="272561.CT_215"/>
<dbReference type="EnsemblBacteria" id="AAC67807">
    <property type="protein sequence ID" value="AAC67807"/>
    <property type="gene ID" value="CT_215"/>
</dbReference>
<dbReference type="KEGG" id="ctr:CT_215"/>
<dbReference type="PATRIC" id="fig|272561.5.peg.230"/>
<dbReference type="HOGENOM" id="CLU_057069_0_0_0"/>
<dbReference type="InParanoid" id="O84217"/>
<dbReference type="OrthoDB" id="9769559at2"/>
<dbReference type="Proteomes" id="UP000000431">
    <property type="component" value="Chromosome"/>
</dbReference>
<dbReference type="GO" id="GO:0005737">
    <property type="term" value="C:cytoplasm"/>
    <property type="evidence" value="ECO:0007669"/>
    <property type="project" value="UniProtKB-SubCell"/>
</dbReference>
<dbReference type="GO" id="GO:0004332">
    <property type="term" value="F:fructose-bisphosphate aldolase activity"/>
    <property type="evidence" value="ECO:0000318"/>
    <property type="project" value="GO_Central"/>
</dbReference>
<dbReference type="GO" id="GO:0006096">
    <property type="term" value="P:glycolytic process"/>
    <property type="evidence" value="ECO:0007669"/>
    <property type="project" value="UniProtKB-KW"/>
</dbReference>
<dbReference type="CDD" id="cd00958">
    <property type="entry name" value="DhnA"/>
    <property type="match status" value="1"/>
</dbReference>
<dbReference type="Gene3D" id="3.20.20.70">
    <property type="entry name" value="Aldolase class I"/>
    <property type="match status" value="1"/>
</dbReference>
<dbReference type="InterPro" id="IPR013785">
    <property type="entry name" value="Aldolase_TIM"/>
</dbReference>
<dbReference type="InterPro" id="IPR002915">
    <property type="entry name" value="DeoC/FbaB/LacD_aldolase"/>
</dbReference>
<dbReference type="InterPro" id="IPR050456">
    <property type="entry name" value="DeoC/FbaB_aldolase"/>
</dbReference>
<dbReference type="InterPro" id="IPR041720">
    <property type="entry name" value="FbaB-like"/>
</dbReference>
<dbReference type="NCBIfam" id="NF006705">
    <property type="entry name" value="PRK09250.1-2"/>
    <property type="match status" value="1"/>
</dbReference>
<dbReference type="NCBIfam" id="NF006707">
    <property type="entry name" value="PRK09250.1-4"/>
    <property type="match status" value="1"/>
</dbReference>
<dbReference type="PANTHER" id="PTHR47916">
    <property type="entry name" value="FRUCTOSE-BISPHOSPHATE ALDOLASE CLASS 1"/>
    <property type="match status" value="1"/>
</dbReference>
<dbReference type="PANTHER" id="PTHR47916:SF4">
    <property type="entry name" value="FRUCTOSE-BISPHOSPHATE ALDOLASE CLASS 1"/>
    <property type="match status" value="1"/>
</dbReference>
<dbReference type="Pfam" id="PF01791">
    <property type="entry name" value="DeoC"/>
    <property type="match status" value="1"/>
</dbReference>
<dbReference type="SMART" id="SM01133">
    <property type="entry name" value="DeoC"/>
    <property type="match status" value="1"/>
</dbReference>
<dbReference type="SUPFAM" id="SSF51569">
    <property type="entry name" value="Aldolase"/>
    <property type="match status" value="1"/>
</dbReference>
<name>ALF1_CHLTR</name>
<protein>
    <recommendedName>
        <fullName>Probable fructose-bisphosphate aldolase class 1</fullName>
        <ecNumber>4.1.2.13</ecNumber>
    </recommendedName>
    <alternativeName>
        <fullName>Probable fructose-bisphosphate aldolase class I</fullName>
        <shortName>FBP aldolase</shortName>
    </alternativeName>
</protein>
<accession>O84217</accession>
<comment type="catalytic activity">
    <reaction>
        <text>beta-D-fructose 1,6-bisphosphate = D-glyceraldehyde 3-phosphate + dihydroxyacetone phosphate</text>
        <dbReference type="Rhea" id="RHEA:14729"/>
        <dbReference type="ChEBI" id="CHEBI:32966"/>
        <dbReference type="ChEBI" id="CHEBI:57642"/>
        <dbReference type="ChEBI" id="CHEBI:59776"/>
        <dbReference type="EC" id="4.1.2.13"/>
    </reaction>
</comment>
<comment type="subcellular location">
    <subcellularLocation>
        <location evidence="2">Cytoplasm</location>
    </subcellularLocation>
</comment>
<comment type="similarity">
    <text evidence="2">Belongs to the DeoC/FbaB aldolase family. FbaB subfamily.</text>
</comment>